<accession>Q2XXL8</accession>
<name>VNP_VARVA</name>
<reference key="1">
    <citation type="journal article" date="2006" name="Nature">
        <title>Early evolution of the venom system in lizards and snakes.</title>
        <authorList>
            <person name="Fry B.G."/>
            <person name="Vidal N."/>
            <person name="Norman J.A."/>
            <person name="Vonk F.J."/>
            <person name="Scheib H."/>
            <person name="Ramjan S.F.R."/>
            <person name="Kuruppu S."/>
            <person name="Fung K."/>
            <person name="Blair Hedges S."/>
            <person name="Richardson M.K."/>
            <person name="Hodgson W.C."/>
            <person name="Ignjatovic V."/>
            <person name="Summerhayes R."/>
            <person name="Kochva E."/>
        </authorList>
    </citation>
    <scope>NUCLEOTIDE SEQUENCE [LARGE SCALE MRNA]</scope>
    <source>
        <tissue>Venom gland</tissue>
    </source>
</reference>
<comment type="function">
    <text evidence="1">Exhibits natriuretic and vasodepressor activity. Acts by stimulating cGMP (By similarity).</text>
</comment>
<comment type="subcellular location">
    <subcellularLocation>
        <location evidence="5">Secreted</location>
    </subcellularLocation>
</comment>
<comment type="tissue specificity">
    <text evidence="5">Expressed by the venom gland.</text>
</comment>
<comment type="similarity">
    <text evidence="4">Belongs to the natriuretic peptide family.</text>
</comment>
<feature type="signal peptide" evidence="2">
    <location>
        <begin position="1"/>
        <end position="25"/>
    </location>
</feature>
<feature type="propeptide" id="PRO_0000342437" evidence="4">
    <location>
        <begin position="26"/>
        <end position="85"/>
    </location>
</feature>
<feature type="chain" id="PRO_0000342438" description="Natriuretic peptide GNP1" evidence="4">
    <location>
        <begin position="88"/>
        <end position="123"/>
    </location>
</feature>
<feature type="region of interest" description="Disordered" evidence="3">
    <location>
        <begin position="23"/>
        <end position="78"/>
    </location>
</feature>
<feature type="region of interest" description="Disordered" evidence="3">
    <location>
        <begin position="105"/>
        <end position="125"/>
    </location>
</feature>
<feature type="disulfide bond" evidence="4">
    <location>
        <begin position="94"/>
        <end position="110"/>
    </location>
</feature>
<proteinExistence type="evidence at transcript level"/>
<protein>
    <recommendedName>
        <fullName evidence="6">Natriuretic peptide GNP1</fullName>
    </recommendedName>
</protein>
<keyword id="KW-0165">Cleavage on pair of basic residues</keyword>
<keyword id="KW-1015">Disulfide bond</keyword>
<keyword id="KW-0382">Hypotensive agent</keyword>
<keyword id="KW-0964">Secreted</keyword>
<keyword id="KW-0732">Signal</keyword>
<keyword id="KW-0800">Toxin</keyword>
<keyword id="KW-0838">Vasoactive</keyword>
<dbReference type="EMBL" id="DQ139927">
    <property type="protein sequence ID" value="AAZ75633.1"/>
    <property type="molecule type" value="mRNA"/>
</dbReference>
<dbReference type="GO" id="GO:0005737">
    <property type="term" value="C:cytoplasm"/>
    <property type="evidence" value="ECO:0007669"/>
    <property type="project" value="TreeGrafter"/>
</dbReference>
<dbReference type="GO" id="GO:0005615">
    <property type="term" value="C:extracellular space"/>
    <property type="evidence" value="ECO:0007669"/>
    <property type="project" value="TreeGrafter"/>
</dbReference>
<dbReference type="GO" id="GO:0005179">
    <property type="term" value="F:hormone activity"/>
    <property type="evidence" value="ECO:0007669"/>
    <property type="project" value="InterPro"/>
</dbReference>
<dbReference type="GO" id="GO:0051427">
    <property type="term" value="F:hormone receptor binding"/>
    <property type="evidence" value="ECO:0007669"/>
    <property type="project" value="TreeGrafter"/>
</dbReference>
<dbReference type="GO" id="GO:0090729">
    <property type="term" value="F:toxin activity"/>
    <property type="evidence" value="ECO:0007669"/>
    <property type="project" value="UniProtKB-KW"/>
</dbReference>
<dbReference type="GO" id="GO:0097746">
    <property type="term" value="P:blood vessel diameter maintenance"/>
    <property type="evidence" value="ECO:0007669"/>
    <property type="project" value="UniProtKB-KW"/>
</dbReference>
<dbReference type="GO" id="GO:0006182">
    <property type="term" value="P:cGMP biosynthetic process"/>
    <property type="evidence" value="ECO:0007669"/>
    <property type="project" value="TreeGrafter"/>
</dbReference>
<dbReference type="GO" id="GO:0019934">
    <property type="term" value="P:cGMP-mediated signaling"/>
    <property type="evidence" value="ECO:0007669"/>
    <property type="project" value="TreeGrafter"/>
</dbReference>
<dbReference type="GO" id="GO:0003085">
    <property type="term" value="P:negative regulation of systemic arterial blood pressure"/>
    <property type="evidence" value="ECO:0007669"/>
    <property type="project" value="TreeGrafter"/>
</dbReference>
<dbReference type="GO" id="GO:0007218">
    <property type="term" value="P:neuropeptide signaling pathway"/>
    <property type="evidence" value="ECO:0007669"/>
    <property type="project" value="TreeGrafter"/>
</dbReference>
<dbReference type="GO" id="GO:0007168">
    <property type="term" value="P:receptor guanylyl cyclase signaling pathway"/>
    <property type="evidence" value="ECO:0007669"/>
    <property type="project" value="TreeGrafter"/>
</dbReference>
<dbReference type="InterPro" id="IPR000663">
    <property type="entry name" value="Natr_peptide"/>
</dbReference>
<dbReference type="InterPro" id="IPR030480">
    <property type="entry name" value="Natr_peptide_CS"/>
</dbReference>
<dbReference type="InterPro" id="IPR050787">
    <property type="entry name" value="Natriuretic_peptide"/>
</dbReference>
<dbReference type="InterPro" id="IPR002408">
    <property type="entry name" value="Natriuretic_peptide_brain"/>
</dbReference>
<dbReference type="PANTHER" id="PTHR14066">
    <property type="entry name" value="ATRIAL NATRIURETIC FACTOR PRECURSOR"/>
    <property type="match status" value="1"/>
</dbReference>
<dbReference type="PANTHER" id="PTHR14066:SF10">
    <property type="entry name" value="NATRIURETIC PEPTIDES B"/>
    <property type="match status" value="1"/>
</dbReference>
<dbReference type="Pfam" id="PF00212">
    <property type="entry name" value="ANP"/>
    <property type="match status" value="1"/>
</dbReference>
<dbReference type="PRINTS" id="PR00712">
    <property type="entry name" value="BNATPEPTIDE"/>
</dbReference>
<dbReference type="SMART" id="SM00183">
    <property type="entry name" value="NAT_PEP"/>
    <property type="match status" value="1"/>
</dbReference>
<dbReference type="PROSITE" id="PS00263">
    <property type="entry name" value="NATRIURETIC_PEPTIDE"/>
    <property type="match status" value="1"/>
</dbReference>
<evidence type="ECO:0000250" key="1"/>
<evidence type="ECO:0000255" key="2"/>
<evidence type="ECO:0000256" key="3">
    <source>
        <dbReference type="SAM" id="MobiDB-lite"/>
    </source>
</evidence>
<evidence type="ECO:0000305" key="4"/>
<evidence type="ECO:0000305" key="5">
    <source>
    </source>
</evidence>
<evidence type="ECO:0000312" key="6">
    <source>
        <dbReference type="EMBL" id="AAZ75633.1"/>
    </source>
</evidence>
<sequence length="125" mass="13329">MDPRLVRAGSLVLLLALLVQDQGAAHPARAGQKYKPLIRRSEEDSQALGQEGDVAARAADEEEDAAGPGDALRQPAFKTLLASREKRLQPEGSCFGQKMDRIGHVSGMGCNKFDPNKGSSSTGKK</sequence>
<organism>
    <name type="scientific">Varanus varius</name>
    <name type="common">Lace monitor lizard</name>
    <name type="synonym">Lacerta varia</name>
    <dbReference type="NCBI Taxonomy" id="8559"/>
    <lineage>
        <taxon>Eukaryota</taxon>
        <taxon>Metazoa</taxon>
        <taxon>Chordata</taxon>
        <taxon>Craniata</taxon>
        <taxon>Vertebrata</taxon>
        <taxon>Euteleostomi</taxon>
        <taxon>Lepidosauria</taxon>
        <taxon>Squamata</taxon>
        <taxon>Bifurcata</taxon>
        <taxon>Unidentata</taxon>
        <taxon>Episquamata</taxon>
        <taxon>Toxicofera</taxon>
        <taxon>Anguimorpha</taxon>
        <taxon>Paleoanguimorpha</taxon>
        <taxon>Varanoidea</taxon>
        <taxon>Varanidae</taxon>
        <taxon>Varanus</taxon>
    </lineage>
</organism>